<protein>
    <recommendedName>
        <fullName evidence="1">Large ribosomal subunit protein bL12</fullName>
    </recommendedName>
    <alternativeName>
        <fullName evidence="3">50S ribosomal protein L7/L12</fullName>
        <shortName>RA</shortName>
    </alternativeName>
</protein>
<proteinExistence type="evidence at protein level"/>
<organism>
    <name type="scientific">Cereibacter sphaeroides</name>
    <name type="common">Rhodobacter sphaeroides</name>
    <dbReference type="NCBI Taxonomy" id="1063"/>
    <lineage>
        <taxon>Bacteria</taxon>
        <taxon>Pseudomonadati</taxon>
        <taxon>Pseudomonadota</taxon>
        <taxon>Alphaproteobacteria</taxon>
        <taxon>Rhodobacterales</taxon>
        <taxon>Paracoccaceae</taxon>
        <taxon>Cereibacter</taxon>
    </lineage>
</organism>
<accession>P02397</accession>
<name>RL7_CERSP</name>
<reference key="1">
    <citation type="journal article" date="1983" name="Biochim. Biophys. Acta">
        <title>Complete amino acid sequence of an L7/L12-type ribosomal protein from Rhodopseudomonas spheroides.</title>
        <authorList>
            <person name="Itoh T."/>
            <person name="Higo K."/>
        </authorList>
    </citation>
    <scope>PROTEIN SEQUENCE OF 2-125</scope>
</reference>
<sequence>MADLNKLAEDIVGLTLLEAQELKTILKDKYGIEPAAGGAVMMAGPAAGAAAPAEEEKTEFDVGLTDAGANKINVIKEVRAITGLGLKEAKDLVEAGGKVKEAVAKADAEAMKKKLEEAGAKVELK</sequence>
<feature type="initiator methionine" description="Removed" evidence="2">
    <location>
        <position position="1"/>
    </location>
</feature>
<feature type="chain" id="PRO_0000157568" description="Large ribosomal subunit protein bL12">
    <location>
        <begin position="2"/>
        <end position="125"/>
    </location>
</feature>
<gene>
    <name evidence="1" type="primary">rplL</name>
</gene>
<evidence type="ECO:0000255" key="1">
    <source>
        <dbReference type="HAMAP-Rule" id="MF_00368"/>
    </source>
</evidence>
<evidence type="ECO:0000269" key="2">
    <source ref="1"/>
</evidence>
<evidence type="ECO:0000305" key="3"/>
<keyword id="KW-0903">Direct protein sequencing</keyword>
<keyword id="KW-0687">Ribonucleoprotein</keyword>
<keyword id="KW-0689">Ribosomal protein</keyword>
<comment type="function">
    <text evidence="1">Forms part of the ribosomal stalk which helps the ribosome interact with GTP-bound translation factors. Is thus essential for accurate translation.</text>
</comment>
<comment type="subunit">
    <text evidence="1">Homodimer. Part of the ribosomal stalk of the 50S ribosomal subunit. Forms a multimeric L10(L12)X complex, where L10 forms an elongated spine to which 2 to 4 L12 dimers bind in a sequential fashion. Binds GTP-bound translation factors.</text>
</comment>
<comment type="similarity">
    <text evidence="1">Belongs to the bacterial ribosomal protein bL12 family.</text>
</comment>
<dbReference type="PIR" id="A02773">
    <property type="entry name" value="R5RFRA"/>
</dbReference>
<dbReference type="SMR" id="P02397"/>
<dbReference type="GO" id="GO:0022625">
    <property type="term" value="C:cytosolic large ribosomal subunit"/>
    <property type="evidence" value="ECO:0007669"/>
    <property type="project" value="TreeGrafter"/>
</dbReference>
<dbReference type="GO" id="GO:0003729">
    <property type="term" value="F:mRNA binding"/>
    <property type="evidence" value="ECO:0007669"/>
    <property type="project" value="TreeGrafter"/>
</dbReference>
<dbReference type="GO" id="GO:0003735">
    <property type="term" value="F:structural constituent of ribosome"/>
    <property type="evidence" value="ECO:0007669"/>
    <property type="project" value="InterPro"/>
</dbReference>
<dbReference type="GO" id="GO:0006412">
    <property type="term" value="P:translation"/>
    <property type="evidence" value="ECO:0007669"/>
    <property type="project" value="UniProtKB-UniRule"/>
</dbReference>
<dbReference type="CDD" id="cd00387">
    <property type="entry name" value="Ribosomal_L7_L12"/>
    <property type="match status" value="1"/>
</dbReference>
<dbReference type="FunFam" id="3.30.1390.10:FF:000001">
    <property type="entry name" value="50S ribosomal protein L7/L12"/>
    <property type="match status" value="1"/>
</dbReference>
<dbReference type="Gene3D" id="3.30.1390.10">
    <property type="match status" value="1"/>
</dbReference>
<dbReference type="Gene3D" id="1.20.5.710">
    <property type="entry name" value="Single helix bin"/>
    <property type="match status" value="1"/>
</dbReference>
<dbReference type="HAMAP" id="MF_00368">
    <property type="entry name" value="Ribosomal_bL12"/>
    <property type="match status" value="1"/>
</dbReference>
<dbReference type="InterPro" id="IPR000206">
    <property type="entry name" value="Ribosomal_bL12"/>
</dbReference>
<dbReference type="InterPro" id="IPR013823">
    <property type="entry name" value="Ribosomal_bL12_C"/>
</dbReference>
<dbReference type="InterPro" id="IPR014719">
    <property type="entry name" value="Ribosomal_bL12_C/ClpS-like"/>
</dbReference>
<dbReference type="InterPro" id="IPR008932">
    <property type="entry name" value="Ribosomal_bL12_oligo"/>
</dbReference>
<dbReference type="InterPro" id="IPR036235">
    <property type="entry name" value="Ribosomal_bL12_oligo_N_sf"/>
</dbReference>
<dbReference type="NCBIfam" id="TIGR00855">
    <property type="entry name" value="L12"/>
    <property type="match status" value="1"/>
</dbReference>
<dbReference type="PANTHER" id="PTHR45987">
    <property type="entry name" value="39S RIBOSOMAL PROTEIN L12"/>
    <property type="match status" value="1"/>
</dbReference>
<dbReference type="PANTHER" id="PTHR45987:SF4">
    <property type="entry name" value="LARGE RIBOSOMAL SUBUNIT PROTEIN BL12M"/>
    <property type="match status" value="1"/>
</dbReference>
<dbReference type="Pfam" id="PF00542">
    <property type="entry name" value="Ribosomal_L12"/>
    <property type="match status" value="1"/>
</dbReference>
<dbReference type="Pfam" id="PF16320">
    <property type="entry name" value="Ribosomal_L12_N"/>
    <property type="match status" value="1"/>
</dbReference>
<dbReference type="SUPFAM" id="SSF54736">
    <property type="entry name" value="ClpS-like"/>
    <property type="match status" value="1"/>
</dbReference>
<dbReference type="SUPFAM" id="SSF48300">
    <property type="entry name" value="Ribosomal protein L7/12, oligomerisation (N-terminal) domain"/>
    <property type="match status" value="1"/>
</dbReference>